<organism>
    <name type="scientific">Burkholderia ambifaria (strain ATCC BAA-244 / DSM 16087 / CCUG 44356 / LMG 19182 / AMMD)</name>
    <name type="common">Burkholderia cepacia (strain AMMD)</name>
    <dbReference type="NCBI Taxonomy" id="339670"/>
    <lineage>
        <taxon>Bacteria</taxon>
        <taxon>Pseudomonadati</taxon>
        <taxon>Pseudomonadota</taxon>
        <taxon>Betaproteobacteria</taxon>
        <taxon>Burkholderiales</taxon>
        <taxon>Burkholderiaceae</taxon>
        <taxon>Burkholderia</taxon>
        <taxon>Burkholderia cepacia complex</taxon>
    </lineage>
</organism>
<gene>
    <name evidence="1" type="primary">ppk</name>
    <name type="ordered locus">Bamb_1184</name>
</gene>
<protein>
    <recommendedName>
        <fullName evidence="1">Polyphosphate kinase</fullName>
        <ecNumber evidence="1">2.7.4.1</ecNumber>
    </recommendedName>
    <alternativeName>
        <fullName evidence="1">ATP-polyphosphate phosphotransferase</fullName>
    </alternativeName>
    <alternativeName>
        <fullName evidence="1">Polyphosphoric acid kinase</fullName>
    </alternativeName>
</protein>
<evidence type="ECO:0000255" key="1">
    <source>
        <dbReference type="HAMAP-Rule" id="MF_00347"/>
    </source>
</evidence>
<sequence length="687" mass="77391">MSVRYPLLNRELGILGFNERVLAQAADPQVPLLERLRFICITSSNLDEFFEVRMAGLQEQIRDNPGALTPDGMSLQHAYDLVVERAQRLVHRQYTMLHETVLPALEQEGIYFHAADTWNDEQLEWARRYFLDELLPVLTPIGLDPAHPFPRVLNKSLNFVVELEGRDAFGRQAVMGIVQAPRALPRVVRMPQALSGFEHGFVLLSTFMQRFVGELFPQLVVKSCNQFRITRNSELFVDEDEITNLRVALQGELPARHLGNAVRLEVSADTPAHIVRRLLEESLLDEKDCYRVAGSVNLVRLMQIPDLVDRPDLKFAPFTASIPPVIANAPAMFDAIDDGDILLHHPYESFQPVLELLQQAAKDPSVVAIKQTIYRTGTDSPLMDALMAAARNGKEVTVVVELLARFDEETNINWASQLEAVGAHVVYGVVGHKCHAKMMLIVRRVVEGGKATLRRYVHLGTGNYHPRTARLYTDFGLMTADQKICEDVHHVFQQLTGIGGELTLHELWQSPFTLHPRIIESIRAEIDNARAGKRARVVAKMNALLEPTVIAALYEASQAGVKVDLIVRGVCALKPGVPGLSENITVRSIVGRFLEHHRIYYFHADGAEEVYLSSADWMDRNLFRRVEVAFPIRERKLKRRVIAEGLSVCLGDNQSAWLMQSDGHYRRRRAGKTLRNAQLGLLAKFCS</sequence>
<keyword id="KW-0067">ATP-binding</keyword>
<keyword id="KW-0418">Kinase</keyword>
<keyword id="KW-0460">Magnesium</keyword>
<keyword id="KW-0479">Metal-binding</keyword>
<keyword id="KW-0547">Nucleotide-binding</keyword>
<keyword id="KW-0597">Phosphoprotein</keyword>
<keyword id="KW-0808">Transferase</keyword>
<comment type="function">
    <text evidence="1">Catalyzes the reversible transfer of the terminal phosphate of ATP to form a long-chain polyphosphate (polyP).</text>
</comment>
<comment type="catalytic activity">
    <reaction evidence="1">
        <text>[phosphate](n) + ATP = [phosphate](n+1) + ADP</text>
        <dbReference type="Rhea" id="RHEA:19573"/>
        <dbReference type="Rhea" id="RHEA-COMP:9859"/>
        <dbReference type="Rhea" id="RHEA-COMP:14280"/>
        <dbReference type="ChEBI" id="CHEBI:16838"/>
        <dbReference type="ChEBI" id="CHEBI:30616"/>
        <dbReference type="ChEBI" id="CHEBI:456216"/>
        <dbReference type="EC" id="2.7.4.1"/>
    </reaction>
</comment>
<comment type="cofactor">
    <cofactor evidence="1">
        <name>Mg(2+)</name>
        <dbReference type="ChEBI" id="CHEBI:18420"/>
    </cofactor>
</comment>
<comment type="PTM">
    <text evidence="1">An intermediate of this reaction is the autophosphorylated ppk in which a phosphate is covalently linked to a histidine residue through a N-P bond.</text>
</comment>
<comment type="similarity">
    <text evidence="1">Belongs to the polyphosphate kinase 1 (PPK1) family.</text>
</comment>
<feature type="chain" id="PRO_1000079355" description="Polyphosphate kinase">
    <location>
        <begin position="1"/>
        <end position="687"/>
    </location>
</feature>
<feature type="active site" description="Phosphohistidine intermediate" evidence="1">
    <location>
        <position position="435"/>
    </location>
</feature>
<feature type="binding site" evidence="1">
    <location>
        <position position="45"/>
    </location>
    <ligand>
        <name>ATP</name>
        <dbReference type="ChEBI" id="CHEBI:30616"/>
    </ligand>
</feature>
<feature type="binding site" evidence="1">
    <location>
        <position position="375"/>
    </location>
    <ligand>
        <name>Mg(2+)</name>
        <dbReference type="ChEBI" id="CHEBI:18420"/>
    </ligand>
</feature>
<feature type="binding site" evidence="1">
    <location>
        <position position="405"/>
    </location>
    <ligand>
        <name>Mg(2+)</name>
        <dbReference type="ChEBI" id="CHEBI:18420"/>
    </ligand>
</feature>
<feature type="binding site" evidence="1">
    <location>
        <position position="472"/>
    </location>
    <ligand>
        <name>ATP</name>
        <dbReference type="ChEBI" id="CHEBI:30616"/>
    </ligand>
</feature>
<feature type="binding site" evidence="1">
    <location>
        <position position="568"/>
    </location>
    <ligand>
        <name>ATP</name>
        <dbReference type="ChEBI" id="CHEBI:30616"/>
    </ligand>
</feature>
<feature type="binding site" evidence="1">
    <location>
        <position position="596"/>
    </location>
    <ligand>
        <name>ATP</name>
        <dbReference type="ChEBI" id="CHEBI:30616"/>
    </ligand>
</feature>
<name>PPK1_BURCM</name>
<dbReference type="EC" id="2.7.4.1" evidence="1"/>
<dbReference type="EMBL" id="CP000440">
    <property type="protein sequence ID" value="ABI86742.1"/>
    <property type="molecule type" value="Genomic_DNA"/>
</dbReference>
<dbReference type="SMR" id="Q0BGI1"/>
<dbReference type="KEGG" id="bam:Bamb_1184"/>
<dbReference type="PATRIC" id="fig|339670.21.peg.378"/>
<dbReference type="eggNOG" id="COG0855">
    <property type="taxonomic scope" value="Bacteria"/>
</dbReference>
<dbReference type="Proteomes" id="UP000000662">
    <property type="component" value="Chromosome 1"/>
</dbReference>
<dbReference type="GO" id="GO:0009358">
    <property type="term" value="C:polyphosphate kinase complex"/>
    <property type="evidence" value="ECO:0007669"/>
    <property type="project" value="InterPro"/>
</dbReference>
<dbReference type="GO" id="GO:0005524">
    <property type="term" value="F:ATP binding"/>
    <property type="evidence" value="ECO:0007669"/>
    <property type="project" value="UniProtKB-KW"/>
</dbReference>
<dbReference type="GO" id="GO:0046872">
    <property type="term" value="F:metal ion binding"/>
    <property type="evidence" value="ECO:0007669"/>
    <property type="project" value="UniProtKB-KW"/>
</dbReference>
<dbReference type="GO" id="GO:0008976">
    <property type="term" value="F:polyphosphate kinase activity"/>
    <property type="evidence" value="ECO:0007669"/>
    <property type="project" value="UniProtKB-UniRule"/>
</dbReference>
<dbReference type="GO" id="GO:0006799">
    <property type="term" value="P:polyphosphate biosynthetic process"/>
    <property type="evidence" value="ECO:0007669"/>
    <property type="project" value="UniProtKB-UniRule"/>
</dbReference>
<dbReference type="CDD" id="cd09165">
    <property type="entry name" value="PLDc_PaPPK1_C1_like"/>
    <property type="match status" value="1"/>
</dbReference>
<dbReference type="CDD" id="cd09168">
    <property type="entry name" value="PLDc_PaPPK1_C2_like"/>
    <property type="match status" value="1"/>
</dbReference>
<dbReference type="Gene3D" id="3.30.870.10">
    <property type="entry name" value="Endonuclease Chain A"/>
    <property type="match status" value="2"/>
</dbReference>
<dbReference type="Gene3D" id="3.30.1840.10">
    <property type="entry name" value="Polyphosphate kinase middle domain"/>
    <property type="match status" value="1"/>
</dbReference>
<dbReference type="Gene3D" id="1.20.58.310">
    <property type="entry name" value="Polyphosphate kinase N-terminal domain"/>
    <property type="match status" value="1"/>
</dbReference>
<dbReference type="HAMAP" id="MF_00347">
    <property type="entry name" value="Polyphosphate_kinase"/>
    <property type="match status" value="1"/>
</dbReference>
<dbReference type="InterPro" id="IPR003414">
    <property type="entry name" value="PP_kinase"/>
</dbReference>
<dbReference type="InterPro" id="IPR041108">
    <property type="entry name" value="PP_kinase_C_1"/>
</dbReference>
<dbReference type="InterPro" id="IPR024953">
    <property type="entry name" value="PP_kinase_middle"/>
</dbReference>
<dbReference type="InterPro" id="IPR036830">
    <property type="entry name" value="PP_kinase_middle_dom_sf"/>
</dbReference>
<dbReference type="InterPro" id="IPR025200">
    <property type="entry name" value="PPK_C_dom2"/>
</dbReference>
<dbReference type="InterPro" id="IPR025198">
    <property type="entry name" value="PPK_N_dom"/>
</dbReference>
<dbReference type="InterPro" id="IPR036832">
    <property type="entry name" value="PPK_N_dom_sf"/>
</dbReference>
<dbReference type="NCBIfam" id="TIGR03705">
    <property type="entry name" value="poly_P_kin"/>
    <property type="match status" value="1"/>
</dbReference>
<dbReference type="NCBIfam" id="NF003917">
    <property type="entry name" value="PRK05443.1-1"/>
    <property type="match status" value="1"/>
</dbReference>
<dbReference type="NCBIfam" id="NF003918">
    <property type="entry name" value="PRK05443.1-2"/>
    <property type="match status" value="1"/>
</dbReference>
<dbReference type="NCBIfam" id="NF003921">
    <property type="entry name" value="PRK05443.2-2"/>
    <property type="match status" value="1"/>
</dbReference>
<dbReference type="PANTHER" id="PTHR30218">
    <property type="entry name" value="POLYPHOSPHATE KINASE"/>
    <property type="match status" value="1"/>
</dbReference>
<dbReference type="PANTHER" id="PTHR30218:SF0">
    <property type="entry name" value="POLYPHOSPHATE KINASE"/>
    <property type="match status" value="1"/>
</dbReference>
<dbReference type="Pfam" id="PF02503">
    <property type="entry name" value="PP_kinase"/>
    <property type="match status" value="1"/>
</dbReference>
<dbReference type="Pfam" id="PF13090">
    <property type="entry name" value="PP_kinase_C"/>
    <property type="match status" value="1"/>
</dbReference>
<dbReference type="Pfam" id="PF17941">
    <property type="entry name" value="PP_kinase_C_1"/>
    <property type="match status" value="1"/>
</dbReference>
<dbReference type="Pfam" id="PF13089">
    <property type="entry name" value="PP_kinase_N"/>
    <property type="match status" value="1"/>
</dbReference>
<dbReference type="PIRSF" id="PIRSF015589">
    <property type="entry name" value="PP_kinase"/>
    <property type="match status" value="1"/>
</dbReference>
<dbReference type="SUPFAM" id="SSF56024">
    <property type="entry name" value="Phospholipase D/nuclease"/>
    <property type="match status" value="2"/>
</dbReference>
<dbReference type="SUPFAM" id="SSF143724">
    <property type="entry name" value="PHP14-like"/>
    <property type="match status" value="1"/>
</dbReference>
<dbReference type="SUPFAM" id="SSF140356">
    <property type="entry name" value="PPK N-terminal domain-like"/>
    <property type="match status" value="1"/>
</dbReference>
<accession>Q0BGI1</accession>
<proteinExistence type="inferred from homology"/>
<reference key="1">
    <citation type="submission" date="2006-08" db="EMBL/GenBank/DDBJ databases">
        <title>Complete sequence of chromosome 1 of Burkholderia cepacia AMMD.</title>
        <authorList>
            <person name="Copeland A."/>
            <person name="Lucas S."/>
            <person name="Lapidus A."/>
            <person name="Barry K."/>
            <person name="Detter J.C."/>
            <person name="Glavina del Rio T."/>
            <person name="Hammon N."/>
            <person name="Israni S."/>
            <person name="Pitluck S."/>
            <person name="Bruce D."/>
            <person name="Chain P."/>
            <person name="Malfatti S."/>
            <person name="Shin M."/>
            <person name="Vergez L."/>
            <person name="Schmutz J."/>
            <person name="Larimer F."/>
            <person name="Land M."/>
            <person name="Hauser L."/>
            <person name="Kyrpides N."/>
            <person name="Kim E."/>
            <person name="Parke J."/>
            <person name="Coenye T."/>
            <person name="Konstantinidis K."/>
            <person name="Ramette A."/>
            <person name="Tiedje J."/>
            <person name="Richardson P."/>
        </authorList>
    </citation>
    <scope>NUCLEOTIDE SEQUENCE [LARGE SCALE GENOMIC DNA]</scope>
    <source>
        <strain>ATCC BAA-244 / DSM 16087 / CCUG 44356 / LMG 19182 / AMMD</strain>
    </source>
</reference>